<accession>Q79PF5</accession>
<accession>Q31NX2</accession>
<accession>Q9Z3H3</accession>
<dbReference type="EMBL" id="AB010691">
    <property type="protein sequence ID" value="BAA37102.1"/>
    <property type="molecule type" value="Genomic_DNA"/>
</dbReference>
<dbReference type="EMBL" id="AY120853">
    <property type="protein sequence ID" value="AAM82685.1"/>
    <property type="molecule type" value="Genomic_DNA"/>
</dbReference>
<dbReference type="EMBL" id="CP000100">
    <property type="protein sequence ID" value="ABB57247.1"/>
    <property type="molecule type" value="Genomic_DNA"/>
</dbReference>
<dbReference type="PIR" id="T44268">
    <property type="entry name" value="T44268"/>
</dbReference>
<dbReference type="RefSeq" id="WP_011242647.1">
    <property type="nucleotide sequence ID" value="NZ_JACJTX010000003.1"/>
</dbReference>
<dbReference type="PDB" id="4KSO">
    <property type="method" value="X-ray"/>
    <property type="resolution" value="2.62 A"/>
    <property type="chains" value="A/B/C/D=1-102"/>
</dbReference>
<dbReference type="PDB" id="5N8Y">
    <property type="method" value="EM"/>
    <property type="resolution" value="4.70 A"/>
    <property type="chains" value="G/H/I/J/K/L=1-102"/>
</dbReference>
<dbReference type="PDBsum" id="4KSO"/>
<dbReference type="PDBsum" id="5N8Y"/>
<dbReference type="EMDB" id="EMD-3602"/>
<dbReference type="EMDB" id="EMD-5672"/>
<dbReference type="SASBDB" id="Q79PF5"/>
<dbReference type="SMR" id="Q79PF5"/>
<dbReference type="DIP" id="DIP-33331N"/>
<dbReference type="IntAct" id="Q79PF5">
    <property type="interactions" value="2"/>
</dbReference>
<dbReference type="STRING" id="1140.Synpcc7942_1217"/>
<dbReference type="PaxDb" id="1140-Synpcc7942_1217"/>
<dbReference type="GeneID" id="72430076"/>
<dbReference type="KEGG" id="syf:Synpcc7942_1217"/>
<dbReference type="eggNOG" id="COG4251">
    <property type="taxonomic scope" value="Bacteria"/>
</dbReference>
<dbReference type="HOGENOM" id="CLU_144073_0_0_3"/>
<dbReference type="OrthoDB" id="5458519at2"/>
<dbReference type="BioCyc" id="SYNEL:SYNPCC7942_1217-MONOMER"/>
<dbReference type="EvolutionaryTrace" id="Q79PF5"/>
<dbReference type="Proteomes" id="UP000889800">
    <property type="component" value="Chromosome"/>
</dbReference>
<dbReference type="GO" id="GO:0005737">
    <property type="term" value="C:cytoplasm"/>
    <property type="evidence" value="ECO:0007669"/>
    <property type="project" value="UniProtKB-SubCell"/>
</dbReference>
<dbReference type="GO" id="GO:0005886">
    <property type="term" value="C:plasma membrane"/>
    <property type="evidence" value="ECO:0007669"/>
    <property type="project" value="UniProtKB-SubCell"/>
</dbReference>
<dbReference type="GO" id="GO:0042802">
    <property type="term" value="F:identical protein binding"/>
    <property type="evidence" value="ECO:0000353"/>
    <property type="project" value="IntAct"/>
</dbReference>
<dbReference type="GO" id="GO:0007623">
    <property type="term" value="P:circadian rhythm"/>
    <property type="evidence" value="ECO:0007669"/>
    <property type="project" value="UniProtKB-UniRule"/>
</dbReference>
<dbReference type="GO" id="GO:0009649">
    <property type="term" value="P:entrainment of circadian clock"/>
    <property type="evidence" value="ECO:0000314"/>
    <property type="project" value="UniProtKB"/>
</dbReference>
<dbReference type="GO" id="GO:0042326">
    <property type="term" value="P:negative regulation of phosphorylation"/>
    <property type="evidence" value="ECO:0000314"/>
    <property type="project" value="CACAO"/>
</dbReference>
<dbReference type="GO" id="GO:0042752">
    <property type="term" value="P:regulation of circadian rhythm"/>
    <property type="evidence" value="ECO:0000315"/>
    <property type="project" value="CACAO"/>
</dbReference>
<dbReference type="CDD" id="cd02978">
    <property type="entry name" value="KaiB_like"/>
    <property type="match status" value="1"/>
</dbReference>
<dbReference type="FunFam" id="3.40.30.10:FF:000180">
    <property type="entry name" value="Circadian clock protein KaiB"/>
    <property type="match status" value="1"/>
</dbReference>
<dbReference type="Gene3D" id="3.40.30.10">
    <property type="entry name" value="Glutaredoxin"/>
    <property type="match status" value="1"/>
</dbReference>
<dbReference type="HAMAP" id="MF_01835">
    <property type="entry name" value="KaiB"/>
    <property type="match status" value="1"/>
</dbReference>
<dbReference type="InterPro" id="IPR013474">
    <property type="entry name" value="Circ_KaiB"/>
</dbReference>
<dbReference type="InterPro" id="IPR039022">
    <property type="entry name" value="KaiB-like"/>
</dbReference>
<dbReference type="InterPro" id="IPR011649">
    <property type="entry name" value="KaiB_domain"/>
</dbReference>
<dbReference type="InterPro" id="IPR036249">
    <property type="entry name" value="Thioredoxin-like_sf"/>
</dbReference>
<dbReference type="NCBIfam" id="TIGR02654">
    <property type="entry name" value="circ_KaiB"/>
    <property type="match status" value="1"/>
</dbReference>
<dbReference type="NCBIfam" id="NF006798">
    <property type="entry name" value="PRK09301.1"/>
    <property type="match status" value="1"/>
</dbReference>
<dbReference type="PANTHER" id="PTHR41709:SF2">
    <property type="entry name" value="CIRCADIAN CLOCK PROTEIN KAIB2"/>
    <property type="match status" value="1"/>
</dbReference>
<dbReference type="PANTHER" id="PTHR41709">
    <property type="entry name" value="KAIB-LIKE PROTEIN 1"/>
    <property type="match status" value="1"/>
</dbReference>
<dbReference type="Pfam" id="PF07689">
    <property type="entry name" value="KaiB"/>
    <property type="match status" value="1"/>
</dbReference>
<dbReference type="SMART" id="SM01248">
    <property type="entry name" value="KaiB"/>
    <property type="match status" value="1"/>
</dbReference>
<dbReference type="SUPFAM" id="SSF52833">
    <property type="entry name" value="Thioredoxin-like"/>
    <property type="match status" value="1"/>
</dbReference>
<proteinExistence type="evidence at protein level"/>
<sequence length="102" mass="11436">MSPRKTYILKLYVAGNTPNSVRALKTLKNILEVEFQGVYALKVIDVLKNPQLAEEDKILATPTLAKVLPLPVRRIIGDLSDREKVLIGLDLLYGELQDSDDF</sequence>
<organism>
    <name type="scientific">Synechococcus elongatus (strain ATCC 33912 / PCC 7942 / FACHB-805)</name>
    <name type="common">Anacystis nidulans R2</name>
    <dbReference type="NCBI Taxonomy" id="1140"/>
    <lineage>
        <taxon>Bacteria</taxon>
        <taxon>Bacillati</taxon>
        <taxon>Cyanobacteriota</taxon>
        <taxon>Cyanophyceae</taxon>
        <taxon>Synechococcales</taxon>
        <taxon>Synechococcaceae</taxon>
        <taxon>Synechococcus</taxon>
    </lineage>
</organism>
<evidence type="ECO:0000255" key="1">
    <source>
        <dbReference type="HAMAP-Rule" id="MF_01835"/>
    </source>
</evidence>
<evidence type="ECO:0000269" key="2">
    <source>
    </source>
</evidence>
<evidence type="ECO:0000269" key="3">
    <source>
    </source>
</evidence>
<evidence type="ECO:0000269" key="4">
    <source>
    </source>
</evidence>
<evidence type="ECO:0000269" key="5">
    <source>
    </source>
</evidence>
<evidence type="ECO:0000269" key="6">
    <source>
    </source>
</evidence>
<evidence type="ECO:0000269" key="7">
    <source>
    </source>
</evidence>
<evidence type="ECO:0000269" key="8">
    <source>
    </source>
</evidence>
<evidence type="ECO:0000269" key="9">
    <source>
    </source>
</evidence>
<evidence type="ECO:0000269" key="10">
    <source>
    </source>
</evidence>
<evidence type="ECO:0000269" key="11">
    <source>
    </source>
</evidence>
<evidence type="ECO:0000269" key="12">
    <source>
    </source>
</evidence>
<evidence type="ECO:0000269" key="13">
    <source>
    </source>
</evidence>
<evidence type="ECO:0000269" key="14">
    <source>
    </source>
</evidence>
<evidence type="ECO:0000269" key="15">
    <source>
    </source>
</evidence>
<evidence type="ECO:0000269" key="16">
    <source>
    </source>
</evidence>
<evidence type="ECO:0000269" key="17">
    <source>
    </source>
</evidence>
<evidence type="ECO:0000269" key="18">
    <source>
    </source>
</evidence>
<evidence type="ECO:0000269" key="19">
    <source>
    </source>
</evidence>
<evidence type="ECO:0000303" key="20">
    <source>
    </source>
</evidence>
<evidence type="ECO:0000305" key="21"/>
<evidence type="ECO:0000305" key="22">
    <source>
    </source>
</evidence>
<evidence type="ECO:0000312" key="23">
    <source>
        <dbReference type="EMBL" id="AAM82685.1"/>
    </source>
</evidence>
<evidence type="ECO:0000312" key="24">
    <source>
        <dbReference type="EMBL" id="ABB57247.1"/>
    </source>
</evidence>
<evidence type="ECO:0000312" key="25">
    <source>
        <dbReference type="EMBL" id="BAA37102.1"/>
    </source>
</evidence>
<evidence type="ECO:0000312" key="26">
    <source>
        <dbReference type="PDB" id="4KSO"/>
    </source>
</evidence>
<evidence type="ECO:0000312" key="27">
    <source>
        <dbReference type="PDB" id="5N8Y"/>
    </source>
</evidence>
<evidence type="ECO:0007744" key="28">
    <source>
        <dbReference type="PDB" id="4KSO"/>
    </source>
</evidence>
<evidence type="ECO:0007744" key="29">
    <source>
        <dbReference type="PDB" id="5N8Y"/>
    </source>
</evidence>
<evidence type="ECO:0007829" key="30">
    <source>
        <dbReference type="PDB" id="4KSO"/>
    </source>
</evidence>
<keyword id="KW-0002">3D-structure</keyword>
<keyword id="KW-0090">Biological rhythms</keyword>
<keyword id="KW-1003">Cell membrane</keyword>
<keyword id="KW-0963">Cytoplasm</keyword>
<keyword id="KW-0472">Membrane</keyword>
<keyword id="KW-1185">Reference proteome</keyword>
<feature type="chain" id="PRO_0000217767" description="Circadian clock oscillator protein KaiB">
    <location>
        <begin position="1"/>
        <end position="102"/>
    </location>
</feature>
<feature type="mutagenesis site" description="In kaiB1; shortens the period of the circadian rhythm to 21 hours." evidence="19">
    <original>L</original>
    <variation>F</variation>
    <location>
        <position position="11"/>
    </location>
</feature>
<feature type="mutagenesis site" description="Decrease in cooperativity of KaiB(fs) recruitment." evidence="18">
    <original>R</original>
    <variation>A</variation>
    <location>
        <position position="22"/>
    </location>
</feature>
<feature type="mutagenesis site" description="Disrupts circadian rhythms in vivo, cells elongate." evidence="15">
    <original>A</original>
    <variation>D</variation>
    <location>
        <position position="40"/>
    </location>
</feature>
<feature type="mutagenesis site" description="Loss of KaiA binding." evidence="16">
    <original>K</original>
    <variation>A</variation>
    <location>
        <position position="42"/>
    </location>
</feature>
<feature type="mutagenesis site" description="Disrupts circadian rhythms in vivo." evidence="15">
    <original>K</original>
    <variation>E</variation>
    <location>
        <position position="42"/>
    </location>
</feature>
<feature type="mutagenesis site" description="In kaiB2; shortens the period of the circadian rhythm to 22 hours." evidence="19">
    <original>R</original>
    <variation>W</variation>
    <location>
        <position position="74"/>
    </location>
</feature>
<feature type="mutagenesis site" description="Stabilizes the KaiB(fs) form, disrupts KaiC phosphorylation rhythms, does not form a complex with KaiA, dominant-negative over wild-type protein, restores normal cell-length to disruption strains, disturbs regulation of SasA and CikA. Binds CikA PsR." evidence="14">
    <original>GLD</original>
    <variation>ALR</variation>
    <location>
        <begin position="88"/>
        <end position="90"/>
    </location>
</feature>
<feature type="mutagenesis site" description="Stabilizes the KaiB(fs) form, disrupts KaiC phosphorylation rhythms, forms a complex with KaiA, wild-type regulation of SasA, disturbs regulation of CikA, dominant-negative over wild-type protein, restores normal cell-length to disruption strains (i.e. contributes to SasA and CikA regulation)." evidence="14">
    <original>G</original>
    <variation>A</variation>
    <location>
        <position position="88"/>
    </location>
</feature>
<feature type="mutagenesis site" description="Circadian rhythm strongly weakened and destabilized." evidence="9">
    <location>
        <begin position="95"/>
        <end position="102"/>
    </location>
</feature>
<feature type="mutagenesis site" description="Circadian rhythm strongly weakened and destabilized." evidence="9">
    <original>ELQDSDD</original>
    <variation>QELQNNSN</variation>
    <location>
        <begin position="95"/>
        <end position="101"/>
    </location>
</feature>
<feature type="strand" evidence="30">
    <location>
        <begin position="7"/>
        <end position="15"/>
    </location>
</feature>
<feature type="helix" evidence="30">
    <location>
        <begin position="18"/>
        <end position="33"/>
    </location>
</feature>
<feature type="turn" evidence="30">
    <location>
        <begin position="36"/>
        <end position="38"/>
    </location>
</feature>
<feature type="strand" evidence="30">
    <location>
        <begin position="39"/>
        <end position="45"/>
    </location>
</feature>
<feature type="turn" evidence="30">
    <location>
        <begin position="46"/>
        <end position="48"/>
    </location>
</feature>
<feature type="helix" evidence="30">
    <location>
        <begin position="61"/>
        <end position="64"/>
    </location>
</feature>
<feature type="helix" evidence="30">
    <location>
        <begin position="70"/>
        <end position="81"/>
    </location>
</feature>
<feature type="strand" evidence="30">
    <location>
        <begin position="86"/>
        <end position="92"/>
    </location>
</feature>
<reference evidence="25" key="1">
    <citation type="journal article" date="1998" name="Science">
        <title>Expression of a gene cluster kaiABC as a circadian feedback process in cyanobacteria.</title>
        <authorList>
            <person name="Ishiura M."/>
            <person name="Kutsuna S."/>
            <person name="Aoki S."/>
            <person name="Iwasaki H."/>
            <person name="Andersson C.R."/>
            <person name="Tanabe A."/>
            <person name="Golden S.S."/>
            <person name="Johnson C.H."/>
            <person name="Kondo T."/>
        </authorList>
    </citation>
    <scope>NUCLEOTIDE SEQUENCE [GENOMIC DNA]</scope>
    <scope>FUNCTION</scope>
    <scope>INDUCTION</scope>
    <scope>DISRUPTION PHENOTYPE</scope>
    <scope>MUTAGENESIS OF LEU-11 AND ARG-74</scope>
    <source>
        <strain>ATCC 33912 / PCC 7942 / FACHB-805</strain>
    </source>
</reference>
<reference evidence="23" key="2">
    <citation type="submission" date="2002-06" db="EMBL/GenBank/DDBJ databases">
        <title>Synechococcus elongatus PCC7942 cosmid 7G3.</title>
        <authorList>
            <person name="Holtman C.K."/>
            <person name="Sandoval P."/>
            <person name="Chen Y."/>
            <person name="Socias T."/>
            <person name="Mohler B.J."/>
            <person name="McMurtry S."/>
            <person name="Gonzalez A."/>
            <person name="Salinas I."/>
            <person name="Golden S.S."/>
            <person name="Youderian P."/>
        </authorList>
    </citation>
    <scope>NUCLEOTIDE SEQUENCE [GENOMIC DNA]</scope>
    <source>
        <strain>ATCC 33912 / PCC 7942 / FACHB-805</strain>
    </source>
</reference>
<reference evidence="24" key="3">
    <citation type="submission" date="2005-08" db="EMBL/GenBank/DDBJ databases">
        <title>Complete sequence of chromosome 1 of Synechococcus elongatus PCC 7942.</title>
        <authorList>
            <consortium name="US DOE Joint Genome Institute"/>
            <person name="Copeland A."/>
            <person name="Lucas S."/>
            <person name="Lapidus A."/>
            <person name="Barry K."/>
            <person name="Detter J.C."/>
            <person name="Glavina T."/>
            <person name="Hammon N."/>
            <person name="Israni S."/>
            <person name="Pitluck S."/>
            <person name="Schmutz J."/>
            <person name="Larimer F."/>
            <person name="Land M."/>
            <person name="Kyrpides N."/>
            <person name="Lykidis A."/>
            <person name="Golden S."/>
            <person name="Richardson P."/>
        </authorList>
    </citation>
    <scope>NUCLEOTIDE SEQUENCE [LARGE SCALE GENOMIC DNA]</scope>
    <source>
        <strain>ATCC 33912 / PCC 7942 / FACHB-805</strain>
    </source>
</reference>
<reference key="4">
    <citation type="journal article" date="1999" name="EMBO J.">
        <title>Physical interactions among circadian clock proteins KaiA, KaiB and KaiC in cyanobacteria.</title>
        <authorList>
            <person name="Iwasaki H."/>
            <person name="Taniguchi Y."/>
            <person name="Ishiura M."/>
            <person name="Kondo T."/>
        </authorList>
    </citation>
    <scope>HOMODIMERIZATION</scope>
    <scope>INTERACTION WITH KAIA AND KAIC</scope>
    <source>
        <strain>ATCC 33912 / PCC 7942 / FACHB-805</strain>
    </source>
</reference>
<reference key="5">
    <citation type="journal article" date="2003" name="EMBO J.">
        <title>Cyanobacterial circadian clockwork: roles of KaiA, KaiB and the kaiBC promoter in regulating KaiC.</title>
        <authorList>
            <person name="Xu Y."/>
            <person name="Mori T."/>
            <person name="Johnson C.H."/>
        </authorList>
    </citation>
    <scope>FUNCTION</scope>
    <scope>INTERACTION WITH KAIC</scope>
</reference>
<reference key="6">
    <citation type="journal article" date="2003" name="EMBO J.">
        <title>KaiB functions as an attenuator of KaiC phosphorylation in the cyanobacterial circadian clock system.</title>
        <authorList>
            <person name="Kitayama Y."/>
            <person name="Iwasaki H."/>
            <person name="Nishiwaki T."/>
            <person name="Kondo T."/>
        </authorList>
    </citation>
    <scope>FUNCTION</scope>
    <scope>DEVELOPMENTAL STAGE</scope>
    <scope>SUBCELLULAR LOCATION</scope>
    <scope>INTERACTION WITH KAIC</scope>
</reference>
<reference key="7">
    <citation type="journal article" date="2004" name="Proc. Natl. Acad. Sci. U.S.A.">
        <title>Global gene repression by KaiC as a master process of prokaryotic circadian system.</title>
        <authorList>
            <person name="Nakahira Y."/>
            <person name="Katayama M."/>
            <person name="Miyashita H."/>
            <person name="Kutsuna S."/>
            <person name="Iwasaki H."/>
            <person name="Oyama T."/>
            <person name="Kondo T."/>
        </authorList>
    </citation>
    <scope>FUNCTION OF THE KAIABC COMPLEX</scope>
    <scope>INDUCTION</scope>
</reference>
<reference key="8">
    <citation type="journal article" date="2000" name="Cell">
        <title>A kaiC-interacting sensory histidine kinase, SasA, necessary to sustain robust circadian oscillation in cyanobacteria.</title>
        <authorList>
            <person name="Iwasaki H."/>
            <person name="Williams S.B."/>
            <person name="Kitayama Y."/>
            <person name="Ishiura M."/>
            <person name="Golden S.S."/>
            <person name="Kondo T."/>
        </authorList>
    </citation>
    <scope>INTERACTION WITH KAIC</scope>
    <source>
        <strain>ATCC 33912 / PCC 7942 / FACHB-805</strain>
    </source>
</reference>
<reference key="9">
    <citation type="journal article" date="2004" name="Proc. Natl. Acad. Sci. U.S.A.">
        <title>Role of KaiC phosphorylation in the circadian clock system of Synechococcus elongatus PCC 7942.</title>
        <authorList>
            <person name="Nishiwaki T."/>
            <person name="Satomi Y."/>
            <person name="Nakajima M."/>
            <person name="Lee C."/>
            <person name="Kiyohara R."/>
            <person name="Kageyama H."/>
            <person name="Kitayama Y."/>
            <person name="Temamoto M."/>
            <person name="Yamaguchi A."/>
            <person name="Hijikata A."/>
            <person name="Go M."/>
            <person name="Iwasaki H."/>
            <person name="Takao T."/>
            <person name="Kondo T."/>
        </authorList>
    </citation>
    <scope>SUBUNIT</scope>
    <source>
        <strain>ATCC 33912 / PCC 7942 / FACHB-805</strain>
    </source>
</reference>
<reference key="10">
    <citation type="journal article" date="2005" name="Science">
        <title>Reconstitution of circadian oscillation of cyanobacterial KaiC phosphorylation in vitro.</title>
        <authorList>
            <person name="Nakajima M."/>
            <person name="Imai K."/>
            <person name="Ito H."/>
            <person name="Nishiwaki T."/>
            <person name="Murayama Y."/>
            <person name="Iwasaki H."/>
            <person name="Oyama T."/>
            <person name="Kondo T."/>
        </authorList>
    </citation>
    <scope>FUNCTION</scope>
    <scope>RECONSTITUTION OF KAIABC OSCILLATOR</scope>
    <source>
        <strain>ATCC 33912 / PCC 7942 / FACHB-805</strain>
    </source>
</reference>
<reference key="11">
    <citation type="journal article" date="2005" name="J. Biol. Chem.">
        <title>Functionally important substructures of circadian clock protein KaiB in a unique tetramer complex.</title>
        <authorList>
            <person name="Iwase R."/>
            <person name="Imada K."/>
            <person name="Hayashi F."/>
            <person name="Uzumaki T."/>
            <person name="Morishita M."/>
            <person name="Onai K."/>
            <person name="Furukawa Y."/>
            <person name="Namba K."/>
            <person name="Ishiura M."/>
        </authorList>
    </citation>
    <scope>FUNCTION</scope>
    <scope>DOMAIN</scope>
    <scope>MUTAGENESIS OF 95-GLU--ASP-101 AND 95-GLU--GLU-108</scope>
    <source>
        <strain>ATCC 33912 / PCC 7942 / FACHB-805</strain>
    </source>
</reference>
<reference key="12">
    <citation type="journal article" date="2007" name="EMBO J.">
        <title>A sequential program of dual phosphorylation of KaiC as a basis for circadian rhythm in cyanobacteria.</title>
        <authorList>
            <person name="Nishiwaki T."/>
            <person name="Satomi Y."/>
            <person name="Kitayama Y."/>
            <person name="Terauchi K."/>
            <person name="Kiyohara R."/>
            <person name="Takao T."/>
            <person name="Kondo T."/>
        </authorList>
    </citation>
    <scope>FUNCTION</scope>
    <scope>INTERACTION WITH KAIC</scope>
    <scope>SUBUNIT</scope>
    <source>
        <strain>ATCC 33912 / PCC 7942 / FACHB-805</strain>
    </source>
</reference>
<reference key="13">
    <citation type="journal article" date="2007" name="Science">
        <title>Ordered phosphorylation governs oscillation of a three-protein circadian clock.</title>
        <authorList>
            <person name="Rust M.J."/>
            <person name="Markson J.S."/>
            <person name="Lane W.S."/>
            <person name="Fisher D.S."/>
            <person name="O'Shea E.K."/>
        </authorList>
    </citation>
    <scope>FUNCTION</scope>
    <source>
        <strain>ATCC 33912 / PCC 7942 / FACHB-805</strain>
    </source>
</reference>
<reference key="14">
    <citation type="journal article" date="2014" name="Proc. Natl. Acad. Sci. U.S.A.">
        <title>Insight into cyanobacterial circadian timing from structural details of the KaiB-KaiC interaction.</title>
        <authorList>
            <person name="Snijder J."/>
            <person name="Burnley R.J."/>
            <person name="Wiegard A."/>
            <person name="Melquiond A.S."/>
            <person name="Bonvin A.M."/>
            <person name="Axmann I.M."/>
            <person name="Heck A.J."/>
        </authorList>
    </citation>
    <scope>SUBUNIT</scope>
    <scope>INTERACTION WITH KAIC</scope>
</reference>
<reference key="15">
    <citation type="journal article" date="2015" name="Science">
        <title>Circadian rhythms. A protein fold switch joins the circadian oscillator to clock output in cyanobacteria.</title>
        <authorList>
            <person name="Chang Y.G."/>
            <person name="Cohen S.E."/>
            <person name="Phong C."/>
            <person name="Myers W.K."/>
            <person name="Kim Y.I."/>
            <person name="Tseng R."/>
            <person name="Lin J."/>
            <person name="Zhang L."/>
            <person name="Boyd J.S."/>
            <person name="Lee Y."/>
            <person name="Kang S."/>
            <person name="Lee D."/>
            <person name="Li S."/>
            <person name="Britt R.D."/>
            <person name="Rust M.J."/>
            <person name="Golden S.S."/>
            <person name="LiWang A."/>
        </authorList>
    </citation>
    <scope>FUNCTION</scope>
    <scope>SUBUNIT</scope>
    <scope>FOLD-SWITCH</scope>
    <scope>DOMAIN</scope>
    <scope>DISRUPTION PHENOTYPE</scope>
    <scope>MUTAGENESIS OF 88-GLY--ASP-90 AND GLY-88</scope>
    <source>
        <strain>ATCC 33912 / PCC 7942 / FACHB-805</strain>
    </source>
</reference>
<reference key="16">
    <citation type="journal article" date="2017" name="Science">
        <title>Structural basis of the day-night transition in a bacterial circadian clock.</title>
        <authorList>
            <person name="Tseng R."/>
            <person name="Goularte N.F."/>
            <person name="Chavan A."/>
            <person name="Luu J."/>
            <person name="Cohen S.E."/>
            <person name="Chang Y.G."/>
            <person name="Heisler J."/>
            <person name="Li S."/>
            <person name="Michael A.K."/>
            <person name="Tripathi S."/>
            <person name="Golden S.S."/>
            <person name="LiWang A."/>
            <person name="Partch C.L."/>
        </authorList>
    </citation>
    <scope>FUNCTION</scope>
    <scope>SUBUNIT</scope>
    <scope>DISRUPTION PHENOTYPE</scope>
    <scope>MUTAGENESIS OF ALA-40 AND LYS-42</scope>
    <source>
        <strain>ATCC 33912 / PCC 7942 / FACHB-805</strain>
    </source>
</reference>
<reference key="17">
    <citation type="journal article" date="2018" name="Sci. Rep.">
        <title>Conformational rearrangements of the C1 ring in KaiC measure the timing of assembly with KaiB.</title>
        <authorList>
            <person name="Mukaiyama A."/>
            <person name="Furuike Y."/>
            <person name="Abe J."/>
            <person name="Koda S.I."/>
            <person name="Yamashita E."/>
            <person name="Kondo T."/>
            <person name="Akiyama S."/>
        </authorList>
    </citation>
    <scope>SUBUNIT</scope>
</reference>
<reference key="18">
    <citation type="journal article" date="2021" name="Science">
        <title>Reconstitution of an intact clock reveals mechanisms of circadian timekeeping.</title>
        <authorList>
            <person name="Chavan A.G."/>
            <person name="Swan J.A."/>
            <person name="Heisler J."/>
            <person name="Sancar C."/>
            <person name="Ernst D.C."/>
            <person name="Fang M."/>
            <person name="Palacios J.G."/>
            <person name="Spangler R.K."/>
            <person name="Bagshaw C.R."/>
            <person name="Tripathi S."/>
            <person name="Crosby P."/>
            <person name="Golden S.S."/>
            <person name="Partch C.L."/>
            <person name="LiWang A."/>
        </authorList>
    </citation>
    <scope>CLOCK RECONSTITUTION</scope>
    <scope>FUNCTION</scope>
    <scope>SUBUNIT</scope>
    <scope>MUTAGENESIS OF ARG-22</scope>
    <source>
        <strain>ATCC 33912 / PCC 7942 / FACHB-805</strain>
    </source>
</reference>
<reference evidence="28" key="19">
    <citation type="journal article" date="2013" name="J. Mol. Biol.">
        <title>CryoEM and molecular dynamics of the circadian KaiB-KaiC complex indicates that KaiB monomers interact with KaiC and block ATP binding clefts.</title>
        <authorList>
            <person name="Villarreal S.A."/>
            <person name="Pattanayek R."/>
            <person name="Williams D.R."/>
            <person name="Mori T."/>
            <person name="Qin X."/>
            <person name="Johnson C.H."/>
            <person name="Egli M."/>
            <person name="Stewart P.L."/>
        </authorList>
    </citation>
    <scope>X-RAY CRYSTALLOGRAPHY (2.62 ANGSTROMS)</scope>
    <scope>STRUCTURE BY CRYO-ELECTRON MICROSCOPY (16.0 ANGSTROMS) IN COMPLEX WITH KAIC</scope>
    <scope>SUBUNIT</scope>
    <source>
        <strain>ATCC 33912 / PCC 7942 / FACHB-805</strain>
    </source>
</reference>
<reference evidence="29" key="20">
    <citation type="journal article" date="2017" name="Science">
        <title>Structures of the cyanobacterial circadian oscillator frozen in a fully assembled state.</title>
        <authorList>
            <person name="Snijder J."/>
            <person name="Schuller J.M."/>
            <person name="Wiegard A."/>
            <person name="Lossl P."/>
            <person name="Schmelling N."/>
            <person name="Axmann I.M."/>
            <person name="Plitzko J.M."/>
            <person name="Forster F."/>
            <person name="Heck A.J."/>
        </authorList>
    </citation>
    <scope>STRUCTURE BY ELECTRON MICROSCOPY (4.70 ANGSTROMS) OF OSCILLATOR COMPLEXES</scope>
    <scope>SUBUNIT</scope>
    <scope>DOMAIN</scope>
    <scope>MUTAGENESIS OF LYS-42</scope>
</reference>
<name>KAIB_SYNE7</name>
<comment type="function">
    <text evidence="4 5 6 10 11 14 15 16 19">Key component of the KaiABC oscillator complex, which constitutes the main circadian regulator in cyanobacteria (PubMed:17717528, PubMed:28302852, PubMed:9727980). Complex composition changes during the circadian cycle to control KaiC phosphorylation. KaiA stimulates KaiC autophosphorylation, while KaiB sequesters KaiA, leading to KaiC autodephosphorylation. KaiA binding to the KaiC CII domain yields KaiA(2-4):KaiC(6) complexes which stimulate KaiC autophosphorylation. Phospho-Ser-431 KaiC accumulation triggers binding of KaiB to form the KaiB(6):KaiC(6) complex, leading to changes in the output regulators CikA and SasA. KaiB switches to a thioredoxin-like fold (KaiB(fs)) in complex with KaiC (PubMed:26113641, PubMed:28302851, PubMed:28302852). KaiB(6):KaiC(6) formation exposes a site for KaiA binding that sequesters KaiA from the CII domain, making the KaiC(6):KaiB(6):KaiA(12) complex that results in KaiC autodephosphorylation (PubMed:17717528, PubMed:17916691, PubMed:28302852). Complete dephosphorylation of KaiC leads to dissociation of KaiA(2):KaiB(1), completing 1 cycle of the Kai oscillator (PubMed:28302852).</text>
</comment>
<comment type="function">
    <text evidence="8 18">Circadian oscillations can be generated in vitro by incubating KaiA, KaiB and KaiC with 1 mM ATP. The cycle is self-sustainable for at least 3 cycles and resistant to temperature changes (PubMed:15831759). A very robust clock is reconstituted with KaiA, KaiB, KaiC, SasA, CikA and RpaA; output is measured by transcription from an appropriate reporter (PubMed:34618577).</text>
</comment>
<comment type="function">
    <text evidence="1 14 15">A metamorphic protein which reversibly switches between an inactive tetrameric fold and a rare, thioredoxin-like monomeric fold (KaiB(fs)). KaiB(fs) binds phospho-KaiC, KaiA and CikA. KaiA and CikA compete for binding to KaiB(fs), and KaiB(fs) and SasA compete for binding to KaiC, thus the clock oscillator and output signal pathway are tightly coupled.</text>
</comment>
<comment type="subunit">
    <text evidence="2 3 4 5 7 10 12 13 14 15 16 17 18 26 27">Undergoes a major conformational rearrangment; in the free state forms homotetramers with 2 dimers (PubMed:23796516). When bound to the CI domain of KaiC switches to a monomeric thioredoxin-fold (KaiB(fs)) (PubMed:26113641, PubMed:28302851, PubMed:28302852). Monomers, homodimers and homotetramers are detected in solution; at low concentrations only monomers are seen. In vitro forms KaiC(6):KaiB(1) and KaiC(6):KaiB(6) complexes (PubMed:24474762). Only associates with 'Ser-431'-phosphorylated KaiC (and not with doubly phosphorylated KaiC) (PubMed:17717528, PubMed:29892030). Complex formation between KaiB and KaiC is regulated by the phosphorylation state of KaiC and by an ATP hydrolysis-driven conformation change in the CI ring of KaiC; complex formation is slow. Slow complex formation is crucial for the timing of the circadian period (PubMed:29892030). In low resolution cryo-EM forms a KaiC(6):KaiB(6) complex (PubMed:23796516). The KaiABC complex composition changes during the circadian cycle to control KaiC phosphorylation. Complexes KaiC(6), KaiA(2-4):KaiC(6), KaiB(6):KaiC(6) and KaiC(6):KaiB(6):KaiA(12) are among the most important forms, many form cooperatively (PubMed:28302852, PubMed:34618577). The KaiB:KaiC complex is more prevalent at 16 hours (in the dark) than at 4 hours (in the light) in the circadian cycle (PubMed:10786837). The KaiA:KaiB complex is only found at 20-24 hours in the circadian cycle (subjective night) (PubMed:15347812). Binds to the CI domain of KaiC; SasA and KaiB compete to bind to the CI domain (PubMed:26113641, PubMed:28302851, PubMed:28302852).</text>
</comment>
<comment type="interaction">
    <interactant intactId="EBI-619150">
        <id>Q79PF5</id>
    </interactant>
    <interactant intactId="EBI-592281">
        <id>Q79PF6</id>
        <label>kaiA</label>
    </interactant>
    <organismsDiffer>false</organismsDiffer>
    <experiments>11</experiments>
</comment>
<comment type="interaction">
    <interactant intactId="EBI-619150">
        <id>Q79PF5</id>
    </interactant>
    <interactant intactId="EBI-619150">
        <id>Q79PF5</id>
        <label>kaiB</label>
    </interactant>
    <organismsDiffer>false</organismsDiffer>
    <experiments>5</experiments>
</comment>
<comment type="interaction">
    <interactant intactId="EBI-619150">
        <id>Q79PF5</id>
    </interactant>
    <interactant intactId="EBI-592287">
        <id>Q79PF4</id>
        <label>kaiC</label>
    </interactant>
    <organismsDiffer>false</organismsDiffer>
    <experiments>12</experiments>
</comment>
<comment type="subcellular location">
    <subcellularLocation>
        <location evidence="5">Cytoplasm</location>
    </subcellularLocation>
    <subcellularLocation>
        <location evidence="5">Cell membrane</location>
        <topology evidence="5">Peripheral membrane protein</topology>
    </subcellularLocation>
    <text>From circadian time (CT) 12-16 to CT 20 the major fraction is membrane-associated, is then translocated to the cytosol, where it probably interacts with KaiC and KaiA.</text>
</comment>
<comment type="developmental stage">
    <text evidence="5">Accumulates in a circadian fashion, peaking at CT 15-18.</text>
</comment>
<comment type="induction">
    <text evidence="6 19">Transcribed in a circadian rhythm with maximal expression at 12 hours and minimal expression 12 hours later; expressed as a kaiB-kaiC opperon (PubMed:9727980). Down-regulated by KaiC (PubMed:14709675, PubMed:9727980).</text>
</comment>
<comment type="domain">
    <text evidence="9 14 16 22">The C-terminal region may confer species specificity; C-terminal hybrids do not all rescue deletions in S.elongatus PCC 7942 (PubMed:16227211). Has 2 forms, fold switches to a thioredoxin-like fold (KaiB(fs)) when bound to KaiC (PubMed:26113641, PubMed:28302852). The KaiB(fs) form binds faster to KaiC than wild-type, thus less fully phosphorylated KaiC forms; the KaiB(fs) form activates signaling through CikA and inhibits signaling through SasA (Probable) (PubMed:26113641). A mutant locked in the KaiB(fs) form binds the CikA PsR domain (PubMed:26113641).</text>
</comment>
<comment type="disruption phenotype">
    <text evidence="14 15 19">Not essential for growth on low light, loss of circadian cycle and rhythmicity (PubMed:9727980). Cells elongate (PubMed:26113641, PubMed:28302851).</text>
</comment>
<comment type="miscellaneous">
    <text evidence="20">'Kai' means 'cycle' in Japanese.</text>
</comment>
<comment type="similarity">
    <text evidence="1 21">Belongs to the KaiB family.</text>
</comment>
<protein>
    <recommendedName>
        <fullName evidence="1 20">Circadian clock oscillator protein KaiB</fullName>
    </recommendedName>
</protein>
<gene>
    <name evidence="1 20" type="primary">kaiB</name>
    <name type="ordered locus">Synpcc7942_1217</name>
    <name type="ORF">see0010</name>
</gene>